<gene>
    <name evidence="1" type="primary">rpiA</name>
    <name type="ordered locus">Swoo_0955</name>
</gene>
<protein>
    <recommendedName>
        <fullName evidence="1">Ribose-5-phosphate isomerase A</fullName>
        <ecNumber evidence="1">5.3.1.6</ecNumber>
    </recommendedName>
    <alternativeName>
        <fullName evidence="1">Phosphoriboisomerase A</fullName>
        <shortName evidence="1">PRI</shortName>
    </alternativeName>
</protein>
<organism>
    <name type="scientific">Shewanella woodyi (strain ATCC 51908 / MS32)</name>
    <dbReference type="NCBI Taxonomy" id="392500"/>
    <lineage>
        <taxon>Bacteria</taxon>
        <taxon>Pseudomonadati</taxon>
        <taxon>Pseudomonadota</taxon>
        <taxon>Gammaproteobacteria</taxon>
        <taxon>Alteromonadales</taxon>
        <taxon>Shewanellaceae</taxon>
        <taxon>Shewanella</taxon>
    </lineage>
</organism>
<keyword id="KW-0413">Isomerase</keyword>
<keyword id="KW-1185">Reference proteome</keyword>
<evidence type="ECO:0000255" key="1">
    <source>
        <dbReference type="HAMAP-Rule" id="MF_00170"/>
    </source>
</evidence>
<reference key="1">
    <citation type="submission" date="2008-02" db="EMBL/GenBank/DDBJ databases">
        <title>Complete sequence of Shewanella woodyi ATCC 51908.</title>
        <authorList>
            <consortium name="US DOE Joint Genome Institute"/>
            <person name="Copeland A."/>
            <person name="Lucas S."/>
            <person name="Lapidus A."/>
            <person name="Glavina del Rio T."/>
            <person name="Dalin E."/>
            <person name="Tice H."/>
            <person name="Bruce D."/>
            <person name="Goodwin L."/>
            <person name="Pitluck S."/>
            <person name="Sims D."/>
            <person name="Brettin T."/>
            <person name="Detter J.C."/>
            <person name="Han C."/>
            <person name="Kuske C.R."/>
            <person name="Schmutz J."/>
            <person name="Larimer F."/>
            <person name="Land M."/>
            <person name="Hauser L."/>
            <person name="Kyrpides N."/>
            <person name="Lykidis A."/>
            <person name="Zhao J.-S."/>
            <person name="Richardson P."/>
        </authorList>
    </citation>
    <scope>NUCLEOTIDE SEQUENCE [LARGE SCALE GENOMIC DNA]</scope>
    <source>
        <strain>ATCC 51908 / MS32</strain>
    </source>
</reference>
<accession>B1KFT2</accession>
<name>RPIA_SHEWM</name>
<feature type="chain" id="PRO_1000097693" description="Ribose-5-phosphate isomerase A">
    <location>
        <begin position="1"/>
        <end position="218"/>
    </location>
</feature>
<feature type="active site" description="Proton acceptor" evidence="1">
    <location>
        <position position="103"/>
    </location>
</feature>
<feature type="binding site" evidence="1">
    <location>
        <begin position="28"/>
        <end position="31"/>
    </location>
    <ligand>
        <name>substrate</name>
    </ligand>
</feature>
<feature type="binding site" evidence="1">
    <location>
        <begin position="81"/>
        <end position="84"/>
    </location>
    <ligand>
        <name>substrate</name>
    </ligand>
</feature>
<feature type="binding site" evidence="1">
    <location>
        <begin position="94"/>
        <end position="97"/>
    </location>
    <ligand>
        <name>substrate</name>
    </ligand>
</feature>
<feature type="binding site" evidence="1">
    <location>
        <position position="121"/>
    </location>
    <ligand>
        <name>substrate</name>
    </ligand>
</feature>
<comment type="function">
    <text evidence="1">Catalyzes the reversible conversion of ribose-5-phosphate to ribulose 5-phosphate.</text>
</comment>
<comment type="catalytic activity">
    <reaction evidence="1">
        <text>aldehydo-D-ribose 5-phosphate = D-ribulose 5-phosphate</text>
        <dbReference type="Rhea" id="RHEA:14657"/>
        <dbReference type="ChEBI" id="CHEBI:58121"/>
        <dbReference type="ChEBI" id="CHEBI:58273"/>
        <dbReference type="EC" id="5.3.1.6"/>
    </reaction>
</comment>
<comment type="pathway">
    <text evidence="1">Carbohydrate degradation; pentose phosphate pathway; D-ribose 5-phosphate from D-ribulose 5-phosphate (non-oxidative stage): step 1/1.</text>
</comment>
<comment type="subunit">
    <text evidence="1">Homodimer.</text>
</comment>
<comment type="similarity">
    <text evidence="1">Belongs to the ribose 5-phosphate isomerase family.</text>
</comment>
<proteinExistence type="inferred from homology"/>
<dbReference type="EC" id="5.3.1.6" evidence="1"/>
<dbReference type="EMBL" id="CP000961">
    <property type="protein sequence ID" value="ACA85248.1"/>
    <property type="molecule type" value="Genomic_DNA"/>
</dbReference>
<dbReference type="RefSeq" id="WP_012323595.1">
    <property type="nucleotide sequence ID" value="NC_010506.1"/>
</dbReference>
<dbReference type="SMR" id="B1KFT2"/>
<dbReference type="STRING" id="392500.Swoo_0955"/>
<dbReference type="KEGG" id="swd:Swoo_0955"/>
<dbReference type="eggNOG" id="COG0120">
    <property type="taxonomic scope" value="Bacteria"/>
</dbReference>
<dbReference type="HOGENOM" id="CLU_056590_1_1_6"/>
<dbReference type="UniPathway" id="UPA00115">
    <property type="reaction ID" value="UER00412"/>
</dbReference>
<dbReference type="Proteomes" id="UP000002168">
    <property type="component" value="Chromosome"/>
</dbReference>
<dbReference type="GO" id="GO:0005829">
    <property type="term" value="C:cytosol"/>
    <property type="evidence" value="ECO:0007669"/>
    <property type="project" value="TreeGrafter"/>
</dbReference>
<dbReference type="GO" id="GO:0004751">
    <property type="term" value="F:ribose-5-phosphate isomerase activity"/>
    <property type="evidence" value="ECO:0007669"/>
    <property type="project" value="UniProtKB-UniRule"/>
</dbReference>
<dbReference type="GO" id="GO:0006014">
    <property type="term" value="P:D-ribose metabolic process"/>
    <property type="evidence" value="ECO:0007669"/>
    <property type="project" value="TreeGrafter"/>
</dbReference>
<dbReference type="GO" id="GO:0009052">
    <property type="term" value="P:pentose-phosphate shunt, non-oxidative branch"/>
    <property type="evidence" value="ECO:0007669"/>
    <property type="project" value="UniProtKB-UniRule"/>
</dbReference>
<dbReference type="CDD" id="cd01398">
    <property type="entry name" value="RPI_A"/>
    <property type="match status" value="1"/>
</dbReference>
<dbReference type="FunFam" id="3.30.70.260:FF:000004">
    <property type="entry name" value="Ribose-5-phosphate isomerase A"/>
    <property type="match status" value="1"/>
</dbReference>
<dbReference type="FunFam" id="3.40.50.1360:FF:000001">
    <property type="entry name" value="Ribose-5-phosphate isomerase A"/>
    <property type="match status" value="1"/>
</dbReference>
<dbReference type="Gene3D" id="3.30.70.260">
    <property type="match status" value="1"/>
</dbReference>
<dbReference type="Gene3D" id="3.40.50.1360">
    <property type="match status" value="1"/>
</dbReference>
<dbReference type="HAMAP" id="MF_00170">
    <property type="entry name" value="Rib_5P_isom_A"/>
    <property type="match status" value="1"/>
</dbReference>
<dbReference type="InterPro" id="IPR037171">
    <property type="entry name" value="NagB/RpiA_transferase-like"/>
</dbReference>
<dbReference type="InterPro" id="IPR020672">
    <property type="entry name" value="Ribose5P_isomerase_typA_subgr"/>
</dbReference>
<dbReference type="InterPro" id="IPR004788">
    <property type="entry name" value="Ribose5P_isomerase_type_A"/>
</dbReference>
<dbReference type="NCBIfam" id="NF001924">
    <property type="entry name" value="PRK00702.1"/>
    <property type="match status" value="1"/>
</dbReference>
<dbReference type="NCBIfam" id="TIGR00021">
    <property type="entry name" value="rpiA"/>
    <property type="match status" value="1"/>
</dbReference>
<dbReference type="PANTHER" id="PTHR11934">
    <property type="entry name" value="RIBOSE-5-PHOSPHATE ISOMERASE"/>
    <property type="match status" value="1"/>
</dbReference>
<dbReference type="PANTHER" id="PTHR11934:SF0">
    <property type="entry name" value="RIBOSE-5-PHOSPHATE ISOMERASE"/>
    <property type="match status" value="1"/>
</dbReference>
<dbReference type="Pfam" id="PF06026">
    <property type="entry name" value="Rib_5-P_isom_A"/>
    <property type="match status" value="1"/>
</dbReference>
<dbReference type="SUPFAM" id="SSF75445">
    <property type="entry name" value="D-ribose-5-phosphate isomerase (RpiA), lid domain"/>
    <property type="match status" value="1"/>
</dbReference>
<dbReference type="SUPFAM" id="SSF100950">
    <property type="entry name" value="NagB/RpiA/CoA transferase-like"/>
    <property type="match status" value="1"/>
</dbReference>
<sequence>MTQDEMKKAAGWAALEYVEKDSIVGVGTGSTVNHFIDALATMKAEIEGAVSSSEASTQKMKDLGIPVFDLNSVDELSVYVDGADEINAHMDMIKGGGAALTREKIVAAVADKFICIVDNTKQVDVLGEFPLPVEVIPMARSYVARQLVKLGGDPVYREGVITDNGNIILDVYNMKIVNPKELEQQINKIVGVVTNGLFANRGADVLLVGSPDGVKTLK</sequence>